<feature type="chain" id="PRO_1000127574" description="D-aminoacyl-tRNA deacylase">
    <location>
        <begin position="1"/>
        <end position="145"/>
    </location>
</feature>
<feature type="short sequence motif" description="Gly-cisPro motif, important for rejection of L-amino acids" evidence="1">
    <location>
        <begin position="137"/>
        <end position="138"/>
    </location>
</feature>
<organism>
    <name type="scientific">Shewanella woodyi (strain ATCC 51908 / MS32)</name>
    <dbReference type="NCBI Taxonomy" id="392500"/>
    <lineage>
        <taxon>Bacteria</taxon>
        <taxon>Pseudomonadati</taxon>
        <taxon>Pseudomonadota</taxon>
        <taxon>Gammaproteobacteria</taxon>
        <taxon>Alteromonadales</taxon>
        <taxon>Shewanellaceae</taxon>
        <taxon>Shewanella</taxon>
    </lineage>
</organism>
<sequence length="145" mass="15476">MIALIQRVSQAKVDVDGVTIGAIDKGLLVLLGVEREDDLAKMEKLATKVMSYRVFSDENGKMNLNLEQAGGSLLVVSQFTLAADTGRGLRPSFSGAGTPDQAKTLYDAFVEFCKAKGVTTQTGEFAADMQVSLVNDGPVTFNLQV</sequence>
<proteinExistence type="inferred from homology"/>
<accession>B1KLY5</accession>
<comment type="function">
    <text evidence="1">An aminoacyl-tRNA editing enzyme that deacylates mischarged D-aminoacyl-tRNAs. Also deacylates mischarged glycyl-tRNA(Ala), protecting cells against glycine mischarging by AlaRS. Acts via tRNA-based rather than protein-based catalysis; rejects L-amino acids rather than detecting D-amino acids in the active site. By recycling D-aminoacyl-tRNA to D-amino acids and free tRNA molecules, this enzyme counteracts the toxicity associated with the formation of D-aminoacyl-tRNA entities in vivo and helps enforce protein L-homochirality.</text>
</comment>
<comment type="catalytic activity">
    <reaction evidence="1">
        <text>glycyl-tRNA(Ala) + H2O = tRNA(Ala) + glycine + H(+)</text>
        <dbReference type="Rhea" id="RHEA:53744"/>
        <dbReference type="Rhea" id="RHEA-COMP:9657"/>
        <dbReference type="Rhea" id="RHEA-COMP:13640"/>
        <dbReference type="ChEBI" id="CHEBI:15377"/>
        <dbReference type="ChEBI" id="CHEBI:15378"/>
        <dbReference type="ChEBI" id="CHEBI:57305"/>
        <dbReference type="ChEBI" id="CHEBI:78442"/>
        <dbReference type="ChEBI" id="CHEBI:78522"/>
        <dbReference type="EC" id="3.1.1.96"/>
    </reaction>
</comment>
<comment type="catalytic activity">
    <reaction evidence="1">
        <text>a D-aminoacyl-tRNA + H2O = a tRNA + a D-alpha-amino acid + H(+)</text>
        <dbReference type="Rhea" id="RHEA:13953"/>
        <dbReference type="Rhea" id="RHEA-COMP:10123"/>
        <dbReference type="Rhea" id="RHEA-COMP:10124"/>
        <dbReference type="ChEBI" id="CHEBI:15377"/>
        <dbReference type="ChEBI" id="CHEBI:15378"/>
        <dbReference type="ChEBI" id="CHEBI:59871"/>
        <dbReference type="ChEBI" id="CHEBI:78442"/>
        <dbReference type="ChEBI" id="CHEBI:79333"/>
        <dbReference type="EC" id="3.1.1.96"/>
    </reaction>
</comment>
<comment type="subunit">
    <text evidence="1">Homodimer.</text>
</comment>
<comment type="subcellular location">
    <subcellularLocation>
        <location evidence="1">Cytoplasm</location>
    </subcellularLocation>
</comment>
<comment type="domain">
    <text evidence="1">A Gly-cisPro motif from one monomer fits into the active site of the other monomer to allow specific chiral rejection of L-amino acids.</text>
</comment>
<comment type="similarity">
    <text evidence="1">Belongs to the DTD family.</text>
</comment>
<dbReference type="EC" id="3.1.1.96" evidence="1"/>
<dbReference type="EMBL" id="CP000961">
    <property type="protein sequence ID" value="ACA88865.1"/>
    <property type="molecule type" value="Genomic_DNA"/>
</dbReference>
<dbReference type="RefSeq" id="WP_012327190.1">
    <property type="nucleotide sequence ID" value="NC_010506.1"/>
</dbReference>
<dbReference type="SMR" id="B1KLY5"/>
<dbReference type="STRING" id="392500.Swoo_4615"/>
<dbReference type="KEGG" id="swd:Swoo_4615"/>
<dbReference type="eggNOG" id="COG1490">
    <property type="taxonomic scope" value="Bacteria"/>
</dbReference>
<dbReference type="HOGENOM" id="CLU_076901_1_0_6"/>
<dbReference type="Proteomes" id="UP000002168">
    <property type="component" value="Chromosome"/>
</dbReference>
<dbReference type="GO" id="GO:0005737">
    <property type="term" value="C:cytoplasm"/>
    <property type="evidence" value="ECO:0007669"/>
    <property type="project" value="UniProtKB-SubCell"/>
</dbReference>
<dbReference type="GO" id="GO:0051500">
    <property type="term" value="F:D-tyrosyl-tRNA(Tyr) deacylase activity"/>
    <property type="evidence" value="ECO:0007669"/>
    <property type="project" value="TreeGrafter"/>
</dbReference>
<dbReference type="GO" id="GO:0106026">
    <property type="term" value="F:Gly-tRNA(Ala) deacylase activity"/>
    <property type="evidence" value="ECO:0007669"/>
    <property type="project" value="UniProtKB-UniRule"/>
</dbReference>
<dbReference type="GO" id="GO:0043908">
    <property type="term" value="F:Ser(Gly)-tRNA(Ala) hydrolase activity"/>
    <property type="evidence" value="ECO:0007669"/>
    <property type="project" value="UniProtKB-UniRule"/>
</dbReference>
<dbReference type="GO" id="GO:0000049">
    <property type="term" value="F:tRNA binding"/>
    <property type="evidence" value="ECO:0007669"/>
    <property type="project" value="UniProtKB-UniRule"/>
</dbReference>
<dbReference type="GO" id="GO:0019478">
    <property type="term" value="P:D-amino acid catabolic process"/>
    <property type="evidence" value="ECO:0007669"/>
    <property type="project" value="UniProtKB-UniRule"/>
</dbReference>
<dbReference type="CDD" id="cd00563">
    <property type="entry name" value="Dtyr_deacylase"/>
    <property type="match status" value="1"/>
</dbReference>
<dbReference type="FunFam" id="3.50.80.10:FF:000001">
    <property type="entry name" value="D-aminoacyl-tRNA deacylase"/>
    <property type="match status" value="1"/>
</dbReference>
<dbReference type="Gene3D" id="3.50.80.10">
    <property type="entry name" value="D-tyrosyl-tRNA(Tyr) deacylase"/>
    <property type="match status" value="1"/>
</dbReference>
<dbReference type="HAMAP" id="MF_00518">
    <property type="entry name" value="Deacylase_Dtd"/>
    <property type="match status" value="1"/>
</dbReference>
<dbReference type="InterPro" id="IPR003732">
    <property type="entry name" value="Daa-tRNA_deacyls_DTD"/>
</dbReference>
<dbReference type="InterPro" id="IPR023509">
    <property type="entry name" value="DTD-like_sf"/>
</dbReference>
<dbReference type="NCBIfam" id="TIGR00256">
    <property type="entry name" value="D-aminoacyl-tRNA deacylase"/>
    <property type="match status" value="1"/>
</dbReference>
<dbReference type="PANTHER" id="PTHR10472:SF5">
    <property type="entry name" value="D-AMINOACYL-TRNA DEACYLASE 1"/>
    <property type="match status" value="1"/>
</dbReference>
<dbReference type="PANTHER" id="PTHR10472">
    <property type="entry name" value="D-TYROSYL-TRNA TYR DEACYLASE"/>
    <property type="match status" value="1"/>
</dbReference>
<dbReference type="Pfam" id="PF02580">
    <property type="entry name" value="Tyr_Deacylase"/>
    <property type="match status" value="1"/>
</dbReference>
<dbReference type="SUPFAM" id="SSF69500">
    <property type="entry name" value="DTD-like"/>
    <property type="match status" value="1"/>
</dbReference>
<reference key="1">
    <citation type="submission" date="2008-02" db="EMBL/GenBank/DDBJ databases">
        <title>Complete sequence of Shewanella woodyi ATCC 51908.</title>
        <authorList>
            <consortium name="US DOE Joint Genome Institute"/>
            <person name="Copeland A."/>
            <person name="Lucas S."/>
            <person name="Lapidus A."/>
            <person name="Glavina del Rio T."/>
            <person name="Dalin E."/>
            <person name="Tice H."/>
            <person name="Bruce D."/>
            <person name="Goodwin L."/>
            <person name="Pitluck S."/>
            <person name="Sims D."/>
            <person name="Brettin T."/>
            <person name="Detter J.C."/>
            <person name="Han C."/>
            <person name="Kuske C.R."/>
            <person name="Schmutz J."/>
            <person name="Larimer F."/>
            <person name="Land M."/>
            <person name="Hauser L."/>
            <person name="Kyrpides N."/>
            <person name="Lykidis A."/>
            <person name="Zhao J.-S."/>
            <person name="Richardson P."/>
        </authorList>
    </citation>
    <scope>NUCLEOTIDE SEQUENCE [LARGE SCALE GENOMIC DNA]</scope>
    <source>
        <strain>ATCC 51908 / MS32</strain>
    </source>
</reference>
<gene>
    <name evidence="1" type="primary">dtd</name>
    <name type="ordered locus">Swoo_4615</name>
</gene>
<evidence type="ECO:0000255" key="1">
    <source>
        <dbReference type="HAMAP-Rule" id="MF_00518"/>
    </source>
</evidence>
<name>DTD_SHEWM</name>
<keyword id="KW-0963">Cytoplasm</keyword>
<keyword id="KW-0378">Hydrolase</keyword>
<keyword id="KW-1185">Reference proteome</keyword>
<keyword id="KW-0694">RNA-binding</keyword>
<keyword id="KW-0820">tRNA-binding</keyword>
<protein>
    <recommendedName>
        <fullName evidence="1">D-aminoacyl-tRNA deacylase</fullName>
        <shortName evidence="1">DTD</shortName>
        <ecNumber evidence="1">3.1.1.96</ecNumber>
    </recommendedName>
    <alternativeName>
        <fullName evidence="1">Gly-tRNA(Ala) deacylase</fullName>
    </alternativeName>
</protein>